<comment type="function">
    <text evidence="1">Probable dolichyl pyrophosphate Man9GlcNAc2 alpha-1,3-glucosyltransferase that operates in the biosynthetic pathway of dolichol-linked oligosaccharides, the glycan precursors employed in protein asparagine (N)-glycosylation. The assembly of dolichol-linked oligosaccharides begins on the cytosolic side of the endoplasmic reticulum membrane and finishes in its lumen. The sequential addition of sugars to dolichol pyrophosphate produces dolichol-linked oligosaccharides containing fourteen sugars, including two GlcNAcs, nine mannoses and three glucoses. Once assembled, the oligosaccharide is transferred from the lipid to nascent proteins by oligosaccharyltransferases. In the lumen of the endoplasmic reticulum, adds the first glucose residue from dolichyl phosphate glucose (Dol-P-Glc) onto the lipid-linked oligosaccharide intermediate Man(9)GlcNAc(2)-PP-Dol to produce Glc(1)Man(9)GlcNAc(2)-PP-Dol.</text>
</comment>
<comment type="catalytic activity">
    <reaction evidence="1">
        <text>an alpha-D-Man-(1-&gt;2)-alpha-D-Man-(1-&gt;2)-alpha-D-Man-(1-&gt;3)-[alpha-D-Man-(1-&gt;2)-alpha-D-Man-(1-&gt;3)-[alpha-D-Man-(1-&gt;2)-alpha-D-Man-(1-&gt;6)]-alpha-D-Man-(1-&gt;6)]-beta-D-Man-(1-&gt;4)-beta-D-GlcNAc-(1-&gt;4)-alpha-D-GlcNAc-diphospho-di-trans,poly-cis-dolichol + a di-trans,poly-cis-dolichyl beta-D-glucosyl phosphate = an alpha-D-Glc-(1-&gt;3)-alpha-D-Man-(1-&gt;2)-alpha-D-Man-(1-&gt;2)-alpha-D-Man-(1-&gt;3)-[alpha-D-Man-(1-&gt;2)-alpha-D-Man-(1-&gt;3)-[alpha-D-Man-(1-&gt;2)-alpha-D-Man-(1-&gt;6)]-alpha-D-Man-(1-&gt;6)]-beta-D-Man-(1-&gt;4)-beta-D-GlcNAc-(1-&gt;4)-alpha-D-GlcNAc-diphospho-di-trans,poly-cis-dolichol + a di-trans,poly-cis-dolichyl phosphate + H(+)</text>
        <dbReference type="Rhea" id="RHEA:30635"/>
        <dbReference type="Rhea" id="RHEA-COMP:19498"/>
        <dbReference type="Rhea" id="RHEA-COMP:19502"/>
        <dbReference type="Rhea" id="RHEA-COMP:19520"/>
        <dbReference type="Rhea" id="RHEA-COMP:19521"/>
        <dbReference type="ChEBI" id="CHEBI:15378"/>
        <dbReference type="ChEBI" id="CHEBI:57525"/>
        <dbReference type="ChEBI" id="CHEBI:57683"/>
        <dbReference type="ChEBI" id="CHEBI:132520"/>
        <dbReference type="ChEBI" id="CHEBI:132521"/>
        <dbReference type="EC" id="2.4.1.267"/>
    </reaction>
    <physiologicalReaction direction="left-to-right" evidence="1">
        <dbReference type="Rhea" id="RHEA:30636"/>
    </physiologicalReaction>
</comment>
<comment type="pathway">
    <text evidence="1">Protein modification; protein glycosylation.</text>
</comment>
<comment type="subcellular location">
    <subcellularLocation>
        <location evidence="1">Endoplasmic reticulum membrane</location>
        <topology evidence="2">Multi-pass membrane protein</topology>
    </subcellularLocation>
</comment>
<comment type="similarity">
    <text evidence="3">Belongs to the ALG6/ALG8 glucosyltransferase family.</text>
</comment>
<dbReference type="EC" id="2.4.1.267" evidence="1"/>
<dbReference type="EMBL" id="AAFI02000057">
    <property type="protein sequence ID" value="EAL65535.1"/>
    <property type="molecule type" value="Genomic_DNA"/>
</dbReference>
<dbReference type="RefSeq" id="XP_638905.1">
    <property type="nucleotide sequence ID" value="XM_633813.1"/>
</dbReference>
<dbReference type="SMR" id="Q54QG6"/>
<dbReference type="FunCoup" id="Q54QG6">
    <property type="interactions" value="901"/>
</dbReference>
<dbReference type="STRING" id="44689.Q54QG6"/>
<dbReference type="GlyGen" id="Q54QG6">
    <property type="glycosylation" value="1 site"/>
</dbReference>
<dbReference type="PaxDb" id="44689-DDB0231451"/>
<dbReference type="EnsemblProtists" id="EAL65535">
    <property type="protein sequence ID" value="EAL65535"/>
    <property type="gene ID" value="DDB_G0283841"/>
</dbReference>
<dbReference type="GeneID" id="8624302"/>
<dbReference type="KEGG" id="ddi:DDB_G0283841"/>
<dbReference type="dictyBase" id="DDB_G0283841">
    <property type="gene designation" value="alg6"/>
</dbReference>
<dbReference type="VEuPathDB" id="AmoebaDB:DDB_G0283841"/>
<dbReference type="eggNOG" id="KOG2575">
    <property type="taxonomic scope" value="Eukaryota"/>
</dbReference>
<dbReference type="HOGENOM" id="CLU_008110_3_0_1"/>
<dbReference type="InParanoid" id="Q54QG6"/>
<dbReference type="OMA" id="FQVPPMH"/>
<dbReference type="PhylomeDB" id="Q54QG6"/>
<dbReference type="Reactome" id="R-DDI-446193">
    <property type="pathway name" value="Biosynthesis of the N-glycan precursor (dolichol lipid-linked oligosaccharide, LLO) and transfer to a nascent protein"/>
</dbReference>
<dbReference type="UniPathway" id="UPA00378"/>
<dbReference type="PRO" id="PR:Q54QG6"/>
<dbReference type="Proteomes" id="UP000002195">
    <property type="component" value="Chromosome 4"/>
</dbReference>
<dbReference type="GO" id="GO:0005789">
    <property type="term" value="C:endoplasmic reticulum membrane"/>
    <property type="evidence" value="ECO:0000318"/>
    <property type="project" value="GO_Central"/>
</dbReference>
<dbReference type="GO" id="GO:0042281">
    <property type="term" value="F:dolichyl pyrophosphate Man9GlcNAc2 alpha-1,3-glucosyltransferase activity"/>
    <property type="evidence" value="ECO:0000318"/>
    <property type="project" value="GO_Central"/>
</dbReference>
<dbReference type="GO" id="GO:0006488">
    <property type="term" value="P:dolichol-linked oligosaccharide biosynthetic process"/>
    <property type="evidence" value="ECO:0000318"/>
    <property type="project" value="GO_Central"/>
</dbReference>
<dbReference type="InterPro" id="IPR004856">
    <property type="entry name" value="Glyco_trans_ALG6/ALG8"/>
</dbReference>
<dbReference type="PANTHER" id="PTHR12413">
    <property type="entry name" value="DOLICHYL GLYCOSYLTRANSFERASE"/>
    <property type="match status" value="1"/>
</dbReference>
<dbReference type="PANTHER" id="PTHR12413:SF1">
    <property type="entry name" value="DOLICHYL PYROPHOSPHATE MAN9GLCNAC2 ALPHA-1,3-GLUCOSYLTRANSFERASE"/>
    <property type="match status" value="1"/>
</dbReference>
<dbReference type="Pfam" id="PF03155">
    <property type="entry name" value="Alg6_Alg8"/>
    <property type="match status" value="1"/>
</dbReference>
<evidence type="ECO:0000250" key="1">
    <source>
        <dbReference type="UniProtKB" id="Q9Y672"/>
    </source>
</evidence>
<evidence type="ECO:0000255" key="2"/>
<evidence type="ECO:0000305" key="3"/>
<organism>
    <name type="scientific">Dictyostelium discoideum</name>
    <name type="common">Social amoeba</name>
    <dbReference type="NCBI Taxonomy" id="44689"/>
    <lineage>
        <taxon>Eukaryota</taxon>
        <taxon>Amoebozoa</taxon>
        <taxon>Evosea</taxon>
        <taxon>Eumycetozoa</taxon>
        <taxon>Dictyostelia</taxon>
        <taxon>Dictyosteliales</taxon>
        <taxon>Dictyosteliaceae</taxon>
        <taxon>Dictyostelium</taxon>
    </lineage>
</organism>
<protein>
    <recommendedName>
        <fullName evidence="1">Probable dolichyl pyrophosphate Man9GlcNAc2 alpha-1,3-glucosyltransferase</fullName>
        <ecNumber evidence="1">2.4.1.267</ecNumber>
    </recommendedName>
    <alternativeName>
        <fullName evidence="1">Asparagine-linked glycosylation protein 6 homolog</fullName>
    </alternativeName>
    <alternativeName>
        <fullName>Dol-P-Glc:Man(9)GlcNAc(2)-PP-Dol alpha-1,3-glucosyltransferase</fullName>
    </alternativeName>
    <alternativeName>
        <fullName>Dolichyl-P-Glc:Man9GlcNAc2-PP-dolichyl glucosyltransferase</fullName>
    </alternativeName>
</protein>
<sequence>MKSLNNKVGFSSLNISIVLLILMISLLARYLVSLNGYSGQSKPPMFGDYEAQRHWMEITTNLDIHQWYFNSTDNDLMYWGLDYPPLTAYLSWVFGKIGEFIEPKSMELFTSRGYETDSGKLFMRMTVIVSDLFIWLPSVWFFVKTFYKQRNISQQISAFLFISLQPGLLLIDHGHFQYNGVSLGLGLFAITFIIRDQQLLASFFFVLSLNYKQMCLYYSPAFFFYLLLSNFEFTLKFSKIFSSIFKILKIGIVVIFTFILCWIPFLSIEQASQVLFRLFPFARGLYEDKVANFWCFISIIINVKNLFTTDQLIKICLILTLVTMLPLVYGIKRIPKNKFVFIHSLINSSFSFFLFSFQVHEKTILLVSLPISLLILHHPNMVWWFILISTFSMFPLLFKDGLVIPYFAIMILYIVIGYQFKNSITRSNNQFKHQNSQENLLASSDKSFYSIYLNYWFYLNIIGMVVCHLLYQFAPHPPHLPSLWLLLVCNFSFIHFILTFFYFIKEMTTFSPIKIKSN</sequence>
<accession>Q54QG6</accession>
<name>ALG6_DICDI</name>
<proteinExistence type="inferred from homology"/>
<feature type="chain" id="PRO_0000327819" description="Probable dolichyl pyrophosphate Man9GlcNAc2 alpha-1,3-glucosyltransferase">
    <location>
        <begin position="1"/>
        <end position="518"/>
    </location>
</feature>
<feature type="topological domain" description="Cytoplasmic" evidence="3">
    <location>
        <begin position="1"/>
        <end position="7"/>
    </location>
</feature>
<feature type="transmembrane region" description="Helical" evidence="2">
    <location>
        <begin position="8"/>
        <end position="28"/>
    </location>
</feature>
<feature type="topological domain" description="Lumenal" evidence="3">
    <location>
        <begin position="29"/>
        <end position="126"/>
    </location>
</feature>
<feature type="transmembrane region" description="Helical" evidence="2">
    <location>
        <begin position="127"/>
        <end position="147"/>
    </location>
</feature>
<feature type="topological domain" description="Cytoplasmic" evidence="3">
    <location>
        <begin position="148"/>
        <end position="173"/>
    </location>
</feature>
<feature type="transmembrane region" description="Helical" evidence="2">
    <location>
        <begin position="174"/>
        <end position="194"/>
    </location>
</feature>
<feature type="topological domain" description="Lumenal" evidence="3">
    <location>
        <begin position="195"/>
        <end position="214"/>
    </location>
</feature>
<feature type="transmembrane region" description="Helical" evidence="2">
    <location>
        <begin position="215"/>
        <end position="235"/>
    </location>
</feature>
<feature type="topological domain" description="Cytoplasmic" evidence="3">
    <location>
        <begin position="236"/>
        <end position="246"/>
    </location>
</feature>
<feature type="transmembrane region" description="Helical" evidence="2">
    <location>
        <begin position="247"/>
        <end position="267"/>
    </location>
</feature>
<feature type="topological domain" description="Lumenal" evidence="3">
    <location>
        <begin position="268"/>
        <end position="310"/>
    </location>
</feature>
<feature type="transmembrane region" description="Helical" evidence="2">
    <location>
        <begin position="311"/>
        <end position="331"/>
    </location>
</feature>
<feature type="topological domain" description="Cytoplasmic" evidence="3">
    <location>
        <begin position="332"/>
        <end position="338"/>
    </location>
</feature>
<feature type="transmembrane region" description="Helical" evidence="2">
    <location>
        <begin position="339"/>
        <end position="359"/>
    </location>
</feature>
<feature type="topological domain" description="Lumenal" evidence="3">
    <location>
        <begin position="360"/>
        <end position="367"/>
    </location>
</feature>
<feature type="transmembrane region" description="Helical" evidence="2">
    <location>
        <begin position="368"/>
        <end position="388"/>
    </location>
</feature>
<feature type="topological domain" description="Cytoplasmic" evidence="3">
    <location>
        <begin position="389"/>
        <end position="395"/>
    </location>
</feature>
<feature type="transmembrane region" description="Helical" evidence="2">
    <location>
        <begin position="396"/>
        <end position="416"/>
    </location>
</feature>
<feature type="topological domain" description="Lumenal" evidence="3">
    <location>
        <begin position="417"/>
        <end position="450"/>
    </location>
</feature>
<feature type="transmembrane region" description="Helical" evidence="2">
    <location>
        <begin position="451"/>
        <end position="471"/>
    </location>
</feature>
<feature type="topological domain" description="Cytoplasmic" evidence="3">
    <location>
        <begin position="472"/>
        <end position="483"/>
    </location>
</feature>
<feature type="transmembrane region" description="Helical" evidence="2">
    <location>
        <begin position="484"/>
        <end position="504"/>
    </location>
</feature>
<feature type="topological domain" description="Lumenal" evidence="3">
    <location>
        <begin position="505"/>
        <end position="518"/>
    </location>
</feature>
<feature type="glycosylation site" description="N-linked (GlcNAc...) asparagine" evidence="2">
    <location>
        <position position="70"/>
    </location>
</feature>
<keyword id="KW-0256">Endoplasmic reticulum</keyword>
<keyword id="KW-0325">Glycoprotein</keyword>
<keyword id="KW-0328">Glycosyltransferase</keyword>
<keyword id="KW-0472">Membrane</keyword>
<keyword id="KW-1185">Reference proteome</keyword>
<keyword id="KW-0808">Transferase</keyword>
<keyword id="KW-0812">Transmembrane</keyword>
<keyword id="KW-1133">Transmembrane helix</keyword>
<reference key="1">
    <citation type="journal article" date="2005" name="Nature">
        <title>The genome of the social amoeba Dictyostelium discoideum.</title>
        <authorList>
            <person name="Eichinger L."/>
            <person name="Pachebat J.A."/>
            <person name="Gloeckner G."/>
            <person name="Rajandream M.A."/>
            <person name="Sucgang R."/>
            <person name="Berriman M."/>
            <person name="Song J."/>
            <person name="Olsen R."/>
            <person name="Szafranski K."/>
            <person name="Xu Q."/>
            <person name="Tunggal B."/>
            <person name="Kummerfeld S."/>
            <person name="Madera M."/>
            <person name="Konfortov B.A."/>
            <person name="Rivero F."/>
            <person name="Bankier A.T."/>
            <person name="Lehmann R."/>
            <person name="Hamlin N."/>
            <person name="Davies R."/>
            <person name="Gaudet P."/>
            <person name="Fey P."/>
            <person name="Pilcher K."/>
            <person name="Chen G."/>
            <person name="Saunders D."/>
            <person name="Sodergren E.J."/>
            <person name="Davis P."/>
            <person name="Kerhornou A."/>
            <person name="Nie X."/>
            <person name="Hall N."/>
            <person name="Anjard C."/>
            <person name="Hemphill L."/>
            <person name="Bason N."/>
            <person name="Farbrother P."/>
            <person name="Desany B."/>
            <person name="Just E."/>
            <person name="Morio T."/>
            <person name="Rost R."/>
            <person name="Churcher C.M."/>
            <person name="Cooper J."/>
            <person name="Haydock S."/>
            <person name="van Driessche N."/>
            <person name="Cronin A."/>
            <person name="Goodhead I."/>
            <person name="Muzny D.M."/>
            <person name="Mourier T."/>
            <person name="Pain A."/>
            <person name="Lu M."/>
            <person name="Harper D."/>
            <person name="Lindsay R."/>
            <person name="Hauser H."/>
            <person name="James K.D."/>
            <person name="Quiles M."/>
            <person name="Madan Babu M."/>
            <person name="Saito T."/>
            <person name="Buchrieser C."/>
            <person name="Wardroper A."/>
            <person name="Felder M."/>
            <person name="Thangavelu M."/>
            <person name="Johnson D."/>
            <person name="Knights A."/>
            <person name="Loulseged H."/>
            <person name="Mungall K.L."/>
            <person name="Oliver K."/>
            <person name="Price C."/>
            <person name="Quail M.A."/>
            <person name="Urushihara H."/>
            <person name="Hernandez J."/>
            <person name="Rabbinowitsch E."/>
            <person name="Steffen D."/>
            <person name="Sanders M."/>
            <person name="Ma J."/>
            <person name="Kohara Y."/>
            <person name="Sharp S."/>
            <person name="Simmonds M.N."/>
            <person name="Spiegler S."/>
            <person name="Tivey A."/>
            <person name="Sugano S."/>
            <person name="White B."/>
            <person name="Walker D."/>
            <person name="Woodward J.R."/>
            <person name="Winckler T."/>
            <person name="Tanaka Y."/>
            <person name="Shaulsky G."/>
            <person name="Schleicher M."/>
            <person name="Weinstock G.M."/>
            <person name="Rosenthal A."/>
            <person name="Cox E.C."/>
            <person name="Chisholm R.L."/>
            <person name="Gibbs R.A."/>
            <person name="Loomis W.F."/>
            <person name="Platzer M."/>
            <person name="Kay R.R."/>
            <person name="Williams J.G."/>
            <person name="Dear P.H."/>
            <person name="Noegel A.A."/>
            <person name="Barrell B.G."/>
            <person name="Kuspa A."/>
        </authorList>
    </citation>
    <scope>NUCLEOTIDE SEQUENCE [LARGE SCALE GENOMIC DNA]</scope>
    <source>
        <strain>AX4</strain>
    </source>
</reference>
<gene>
    <name type="primary">alg6</name>
    <name type="ORF">DDB_G0283841</name>
</gene>